<sequence length="515" mass="56722">MYRSLRPPTSIPPPPPSGPSPYPAMINGYPPDVPVGSPANGDAELFVPLQRVMPPTGGRNSIRYRNYAPCQNTTKFFYVDNKLSDLDTYNEDANHSNFRTTVIHNQDLDPSTAATETIQLDNRSCWGGELKTAVKTNCPNISSFFQSDTVRVRLMSKRDPGGTDPDAGVNNPPGAEYKWYDLRIPEGNYALNEIIDLLNEGIVQLYLQEGRQNNVLKSDIGVKFDTRYLDLLKDPVTGLVTPGTYVYKGYHPDIILLPGCAVDFTFSRLSLLLGIAKREPYSKGFTITYEDLQGGNVPALLDLSSVQVDDQDEDVIVVADARPLLKDSKGVSYNVITTGVTQPQTAYRSWLLAYHTLDSPARNKTLLTVPDMAGGIGAMYTSMPDTFTAPAGFKEDNTTNLCPVVAMNLFPSFNKVFYQGASAYVQRLENATQSATAAFNRFPENEILKQAPPMNVSSVCDNQPAVVQQGVLPLKNSLSGLQRVLITDDRRRPIPYVYKTIATVQPRVLSSSTLQ</sequence>
<keyword id="KW-0167">Capsid protein</keyword>
<keyword id="KW-1048">Host nucleus</keyword>
<keyword id="KW-0945">Host-virus interaction</keyword>
<keyword id="KW-0426">Late protein</keyword>
<keyword id="KW-1185">Reference proteome</keyword>
<keyword id="KW-1148">T=25 icosahedral capsid protein</keyword>
<keyword id="KW-1161">Viral attachment to host cell</keyword>
<keyword id="KW-1162">Viral penetration into host cytoplasm</keyword>
<keyword id="KW-0946">Virion</keyword>
<keyword id="KW-1164">Virus endocytosis by host</keyword>
<keyword id="KW-1160">Virus entry into host cell</keyword>
<comment type="function">
    <text evidence="1">Major capsid protein that self-associates to form penton base pentamers, each in the shape of a pentagon, situated at the 12 vertices of the pseudo T=25 capsid. Involved in virus secondary attachment to host cell after initial attachment by the fiber protein, and in endocytosis of virions. As the virus enters the host cell, penton proteins are shed concomitant with virion acidification in the endosome.</text>
</comment>
<comment type="subunit">
    <text evidence="1">Interacts with the fiber protein (via N-terminal tail region). Interacts with the capsid vertex protein; this interaction binds the penton base to neighboring peripentonal hexons.</text>
</comment>
<comment type="subcellular location">
    <subcellularLocation>
        <location evidence="1">Virion</location>
    </subcellularLocation>
    <subcellularLocation>
        <location evidence="1">Host nucleus</location>
    </subcellularLocation>
    <text evidence="1">Located at each vertex of the virion.</text>
</comment>
<comment type="induction">
    <text evidence="1">Expressed in the late phase of the viral replicative cycle.</text>
</comment>
<comment type="miscellaneous">
    <text evidence="1">All late proteins expressed from the major late promoter are produced by alternative splicing and alternative polyadenylation of the same gene giving rise to non-overlapping ORFs. A leader sequence is present in the N-terminus of all these mRNAs and is recognized by the viral shutoff protein to provide expression although conventional translation via ribosome scanning from the cap has been shut off in the host cell.</text>
</comment>
<comment type="similarity">
    <text evidence="1">Belongs to the adenoviridae penton family.</text>
</comment>
<accession>Q64755</accession>
<name>CAPSP_ADEG1</name>
<feature type="chain" id="PRO_0000221879" description="Penton protein">
    <location>
        <begin position="1"/>
        <end position="515"/>
    </location>
</feature>
<feature type="region of interest" description="Disordered" evidence="2">
    <location>
        <begin position="1"/>
        <end position="25"/>
    </location>
</feature>
<feature type="compositionally biased region" description="Pro residues" evidence="2">
    <location>
        <begin position="9"/>
        <end position="22"/>
    </location>
</feature>
<organismHost>
    <name type="scientific">Galliformes</name>
    <dbReference type="NCBI Taxonomy" id="8976"/>
</organismHost>
<proteinExistence type="inferred from homology"/>
<reference key="1">
    <citation type="journal article" date="1996" name="Arch. Virol.">
        <title>Genes for fowl adenovirus CELO penton base and core polypeptides.</title>
        <authorList>
            <person name="Akopian T.A."/>
            <person name="Lazareva S.E."/>
            <person name="Tikhomirov E.E."/>
            <person name="Karpov V.A."/>
            <person name="Naroditsky B.S."/>
        </authorList>
    </citation>
    <scope>NUCLEOTIDE SEQUENCE [GENOMIC DNA]</scope>
</reference>
<reference key="2">
    <citation type="journal article" date="1996" name="J. Virol.">
        <title>The complete DNA sequence and genomic organization of the avian adenovirus CELO.</title>
        <authorList>
            <person name="Chiocca S."/>
            <person name="Kurzbauer R."/>
            <person name="Schaffner G."/>
            <person name="Baker A."/>
            <person name="Mautner V."/>
            <person name="Cotten M."/>
        </authorList>
    </citation>
    <scope>NUCLEOTIDE SEQUENCE [LARGE SCALE GENOMIC DNA]</scope>
</reference>
<evidence type="ECO:0000255" key="1">
    <source>
        <dbReference type="HAMAP-Rule" id="MF_04052"/>
    </source>
</evidence>
<evidence type="ECO:0000256" key="2">
    <source>
        <dbReference type="SAM" id="MobiDB-lite"/>
    </source>
</evidence>
<dbReference type="EMBL" id="U46933">
    <property type="protein sequence ID" value="AAC54908.1"/>
    <property type="molecule type" value="Genomic_DNA"/>
</dbReference>
<dbReference type="RefSeq" id="NP_043882.1">
    <property type="nucleotide sequence ID" value="NC_001720.1"/>
</dbReference>
<dbReference type="SMR" id="Q64755"/>
<dbReference type="GeneID" id="1476561"/>
<dbReference type="KEGG" id="vg:1476561"/>
<dbReference type="Proteomes" id="UP000001594">
    <property type="component" value="Segment"/>
</dbReference>
<dbReference type="GO" id="GO:0042025">
    <property type="term" value="C:host cell nucleus"/>
    <property type="evidence" value="ECO:0007669"/>
    <property type="project" value="UniProtKB-SubCell"/>
</dbReference>
<dbReference type="GO" id="GO:0039623">
    <property type="term" value="C:T=25 icosahedral viral capsid"/>
    <property type="evidence" value="ECO:0007669"/>
    <property type="project" value="UniProtKB-UniRule"/>
</dbReference>
<dbReference type="GO" id="GO:0005198">
    <property type="term" value="F:structural molecule activity"/>
    <property type="evidence" value="ECO:0007669"/>
    <property type="project" value="UniProtKB-UniRule"/>
</dbReference>
<dbReference type="GO" id="GO:0075509">
    <property type="term" value="P:endocytosis involved in viral entry into host cell"/>
    <property type="evidence" value="ECO:0007669"/>
    <property type="project" value="UniProtKB-KW"/>
</dbReference>
<dbReference type="GO" id="GO:0019062">
    <property type="term" value="P:virion attachment to host cell"/>
    <property type="evidence" value="ECO:0007669"/>
    <property type="project" value="UniProtKB-UniRule"/>
</dbReference>
<dbReference type="Gene3D" id="3.90.1620.10">
    <property type="entry name" value="adenovirus 2 penton base, domain 2"/>
    <property type="match status" value="1"/>
</dbReference>
<dbReference type="Gene3D" id="2.60.120.550">
    <property type="entry name" value="Penton protein, domain 1"/>
    <property type="match status" value="1"/>
</dbReference>
<dbReference type="HAMAP" id="MF_04052">
    <property type="entry name" value="ADV_CAPSP"/>
    <property type="match status" value="1"/>
</dbReference>
<dbReference type="InterPro" id="IPR002605">
    <property type="entry name" value="Adeno_Penton_B"/>
</dbReference>
<dbReference type="Pfam" id="PF01686">
    <property type="entry name" value="Adeno_Penton_B"/>
    <property type="match status" value="1"/>
</dbReference>
<gene>
    <name evidence="1" type="primary">L2</name>
</gene>
<protein>
    <recommendedName>
        <fullName evidence="1">Penton protein</fullName>
        <shortName evidence="1">CP-P</shortName>
    </recommendedName>
    <alternativeName>
        <fullName evidence="1">Penton base protein</fullName>
    </alternativeName>
    <alternativeName>
        <fullName evidence="1">Protein III</fullName>
    </alternativeName>
</protein>
<organism>
    <name type="scientific">Fowl adenovirus A serotype 1 (strain CELO / Phelps)</name>
    <name type="common">FAdV-1</name>
    <name type="synonym">Avian adenovirus gal1 (strain Phelps)</name>
    <dbReference type="NCBI Taxonomy" id="10553"/>
    <lineage>
        <taxon>Viruses</taxon>
        <taxon>Varidnaviria</taxon>
        <taxon>Bamfordvirae</taxon>
        <taxon>Preplasmiviricota</taxon>
        <taxon>Tectiliviricetes</taxon>
        <taxon>Rowavirales</taxon>
        <taxon>Adenoviridae</taxon>
        <taxon>Aviadenovirus</taxon>
        <taxon>Fowl aviadenovirus A</taxon>
    </lineage>
</organism>